<name>GRPE_VIBVY</name>
<evidence type="ECO:0000255" key="1">
    <source>
        <dbReference type="HAMAP-Rule" id="MF_01151"/>
    </source>
</evidence>
<evidence type="ECO:0000256" key="2">
    <source>
        <dbReference type="SAM" id="MobiDB-lite"/>
    </source>
</evidence>
<comment type="function">
    <text evidence="1">Participates actively in the response to hyperosmotic and heat shock by preventing the aggregation of stress-denatured proteins, in association with DnaK and GrpE. It is the nucleotide exchange factor for DnaK and may function as a thermosensor. Unfolded proteins bind initially to DnaJ; upon interaction with the DnaJ-bound protein, DnaK hydrolyzes its bound ATP, resulting in the formation of a stable complex. GrpE releases ADP from DnaK; ATP binding to DnaK triggers the release of the substrate protein, thus completing the reaction cycle. Several rounds of ATP-dependent interactions between DnaJ, DnaK and GrpE are required for fully efficient folding.</text>
</comment>
<comment type="subunit">
    <text evidence="1">Homodimer.</text>
</comment>
<comment type="subcellular location">
    <subcellularLocation>
        <location evidence="1">Cytoplasm</location>
    </subcellularLocation>
</comment>
<comment type="similarity">
    <text evidence="1">Belongs to the GrpE family.</text>
</comment>
<proteinExistence type="inferred from homology"/>
<accession>Q7MN92</accession>
<organism>
    <name type="scientific">Vibrio vulnificus (strain YJ016)</name>
    <dbReference type="NCBI Taxonomy" id="196600"/>
    <lineage>
        <taxon>Bacteria</taxon>
        <taxon>Pseudomonadati</taxon>
        <taxon>Pseudomonadota</taxon>
        <taxon>Gammaproteobacteria</taxon>
        <taxon>Vibrionales</taxon>
        <taxon>Vibrionaceae</taxon>
        <taxon>Vibrio</taxon>
    </lineage>
</organism>
<dbReference type="EMBL" id="BA000037">
    <property type="protein sequence ID" value="BAC93589.1"/>
    <property type="molecule type" value="Genomic_DNA"/>
</dbReference>
<dbReference type="RefSeq" id="WP_011149650.1">
    <property type="nucleotide sequence ID" value="NC_005139.1"/>
</dbReference>
<dbReference type="SMR" id="Q7MN92"/>
<dbReference type="STRING" id="672.VV93_v1c07650"/>
<dbReference type="KEGG" id="vvy:VV0825"/>
<dbReference type="PATRIC" id="fig|196600.6.peg.834"/>
<dbReference type="eggNOG" id="COG0576">
    <property type="taxonomic scope" value="Bacteria"/>
</dbReference>
<dbReference type="HOGENOM" id="CLU_057217_6_0_6"/>
<dbReference type="Proteomes" id="UP000002675">
    <property type="component" value="Chromosome I"/>
</dbReference>
<dbReference type="GO" id="GO:0005829">
    <property type="term" value="C:cytosol"/>
    <property type="evidence" value="ECO:0007669"/>
    <property type="project" value="TreeGrafter"/>
</dbReference>
<dbReference type="GO" id="GO:0000774">
    <property type="term" value="F:adenyl-nucleotide exchange factor activity"/>
    <property type="evidence" value="ECO:0007669"/>
    <property type="project" value="InterPro"/>
</dbReference>
<dbReference type="GO" id="GO:0042803">
    <property type="term" value="F:protein homodimerization activity"/>
    <property type="evidence" value="ECO:0007669"/>
    <property type="project" value="InterPro"/>
</dbReference>
<dbReference type="GO" id="GO:0051087">
    <property type="term" value="F:protein-folding chaperone binding"/>
    <property type="evidence" value="ECO:0007669"/>
    <property type="project" value="InterPro"/>
</dbReference>
<dbReference type="GO" id="GO:0051082">
    <property type="term" value="F:unfolded protein binding"/>
    <property type="evidence" value="ECO:0007669"/>
    <property type="project" value="TreeGrafter"/>
</dbReference>
<dbReference type="GO" id="GO:0006457">
    <property type="term" value="P:protein folding"/>
    <property type="evidence" value="ECO:0007669"/>
    <property type="project" value="InterPro"/>
</dbReference>
<dbReference type="CDD" id="cd00446">
    <property type="entry name" value="GrpE"/>
    <property type="match status" value="1"/>
</dbReference>
<dbReference type="FunFam" id="2.30.22.10:FF:000001">
    <property type="entry name" value="Protein GrpE"/>
    <property type="match status" value="1"/>
</dbReference>
<dbReference type="Gene3D" id="3.90.20.20">
    <property type="match status" value="1"/>
</dbReference>
<dbReference type="Gene3D" id="2.30.22.10">
    <property type="entry name" value="Head domain of nucleotide exchange factor GrpE"/>
    <property type="match status" value="1"/>
</dbReference>
<dbReference type="HAMAP" id="MF_01151">
    <property type="entry name" value="GrpE"/>
    <property type="match status" value="1"/>
</dbReference>
<dbReference type="InterPro" id="IPR000740">
    <property type="entry name" value="GrpE"/>
</dbReference>
<dbReference type="InterPro" id="IPR013805">
    <property type="entry name" value="GrpE_coiled_coil"/>
</dbReference>
<dbReference type="InterPro" id="IPR009012">
    <property type="entry name" value="GrpE_head"/>
</dbReference>
<dbReference type="NCBIfam" id="NF010737">
    <property type="entry name" value="PRK14139.1"/>
    <property type="match status" value="1"/>
</dbReference>
<dbReference type="NCBIfam" id="NF010738">
    <property type="entry name" value="PRK14140.1"/>
    <property type="match status" value="1"/>
</dbReference>
<dbReference type="NCBIfam" id="NF010748">
    <property type="entry name" value="PRK14150.1"/>
    <property type="match status" value="1"/>
</dbReference>
<dbReference type="PANTHER" id="PTHR21237">
    <property type="entry name" value="GRPE PROTEIN"/>
    <property type="match status" value="1"/>
</dbReference>
<dbReference type="PANTHER" id="PTHR21237:SF23">
    <property type="entry name" value="GRPE PROTEIN HOMOLOG, MITOCHONDRIAL"/>
    <property type="match status" value="1"/>
</dbReference>
<dbReference type="Pfam" id="PF01025">
    <property type="entry name" value="GrpE"/>
    <property type="match status" value="1"/>
</dbReference>
<dbReference type="PRINTS" id="PR00773">
    <property type="entry name" value="GRPEPROTEIN"/>
</dbReference>
<dbReference type="SUPFAM" id="SSF58014">
    <property type="entry name" value="Coiled-coil domain of nucleotide exchange factor GrpE"/>
    <property type="match status" value="1"/>
</dbReference>
<dbReference type="SUPFAM" id="SSF51064">
    <property type="entry name" value="Head domain of nucleotide exchange factor GrpE"/>
    <property type="match status" value="1"/>
</dbReference>
<dbReference type="PROSITE" id="PS01071">
    <property type="entry name" value="GRPE"/>
    <property type="match status" value="1"/>
</dbReference>
<protein>
    <recommendedName>
        <fullName evidence="1">Protein GrpE</fullName>
    </recommendedName>
    <alternativeName>
        <fullName evidence="1">HSP-70 cofactor</fullName>
    </alternativeName>
</protein>
<keyword id="KW-0143">Chaperone</keyword>
<keyword id="KW-0963">Cytoplasm</keyword>
<keyword id="KW-0346">Stress response</keyword>
<reference key="1">
    <citation type="journal article" date="2003" name="Genome Res.">
        <title>Comparative genome analysis of Vibrio vulnificus, a marine pathogen.</title>
        <authorList>
            <person name="Chen C.-Y."/>
            <person name="Wu K.-M."/>
            <person name="Chang Y.-C."/>
            <person name="Chang C.-H."/>
            <person name="Tsai H.-C."/>
            <person name="Liao T.-L."/>
            <person name="Liu Y.-M."/>
            <person name="Chen H.-J."/>
            <person name="Shen A.B.-T."/>
            <person name="Li J.-C."/>
            <person name="Su T.-L."/>
            <person name="Shao C.-P."/>
            <person name="Lee C.-T."/>
            <person name="Hor L.-I."/>
            <person name="Tsai S.-F."/>
        </authorList>
    </citation>
    <scope>NUCLEOTIDE SEQUENCE [LARGE SCALE GENOMIC DNA]</scope>
    <source>
        <strain>YJ016</strain>
    </source>
</reference>
<feature type="chain" id="PRO_0000113896" description="Protein GrpE">
    <location>
        <begin position="1"/>
        <end position="198"/>
    </location>
</feature>
<feature type="region of interest" description="Disordered" evidence="2">
    <location>
        <begin position="1"/>
        <end position="20"/>
    </location>
</feature>
<feature type="compositionally biased region" description="Basic and acidic residues" evidence="2">
    <location>
        <begin position="1"/>
        <end position="14"/>
    </location>
</feature>
<gene>
    <name evidence="1" type="primary">grpE</name>
    <name type="ordered locus">VV0825</name>
</gene>
<sequence length="198" mass="22305">MSNEENKINEEALKQQDAAEVEVEAVGTDADIEWNEEADESAVKIAELEAALLASEARVKEQQDSVLRAKAEVENMRRRTEQEIDKARKYALNRFAEELLPVIDNLERAIQAADAESEAVKPLLEGVELTHKTFVDVVSKFGLKEINPEGQPFNPEWHQAMSIQESPDHESNTVMFVMQKGYELNGRVIRPAMVMVAK</sequence>